<keyword id="KW-0004">4Fe-4S</keyword>
<keyword id="KW-0067">ATP-binding</keyword>
<keyword id="KW-0963">Cytoplasm</keyword>
<keyword id="KW-0408">Iron</keyword>
<keyword id="KW-0411">Iron-sulfur</keyword>
<keyword id="KW-0460">Magnesium</keyword>
<keyword id="KW-0479">Metal-binding</keyword>
<keyword id="KW-0547">Nucleotide-binding</keyword>
<keyword id="KW-1185">Reference proteome</keyword>
<keyword id="KW-0694">RNA-binding</keyword>
<keyword id="KW-0808">Transferase</keyword>
<keyword id="KW-0819">tRNA processing</keyword>
<keyword id="KW-0820">tRNA-binding</keyword>
<reference key="1">
    <citation type="journal article" date="2004" name="Proc. Natl. Acad. Sci. U.S.A.">
        <title>Genome sequence of the enterobacterial phytopathogen Erwinia carotovora subsp. atroseptica and characterization of virulence factors.</title>
        <authorList>
            <person name="Bell K.S."/>
            <person name="Sebaihia M."/>
            <person name="Pritchard L."/>
            <person name="Holden M.T.G."/>
            <person name="Hyman L.J."/>
            <person name="Holeva M.C."/>
            <person name="Thomson N.R."/>
            <person name="Bentley S.D."/>
            <person name="Churcher L.J.C."/>
            <person name="Mungall K."/>
            <person name="Atkin R."/>
            <person name="Bason N."/>
            <person name="Brooks K."/>
            <person name="Chillingworth T."/>
            <person name="Clark K."/>
            <person name="Doggett J."/>
            <person name="Fraser A."/>
            <person name="Hance Z."/>
            <person name="Hauser H."/>
            <person name="Jagels K."/>
            <person name="Moule S."/>
            <person name="Norbertczak H."/>
            <person name="Ormond D."/>
            <person name="Price C."/>
            <person name="Quail M.A."/>
            <person name="Sanders M."/>
            <person name="Walker D."/>
            <person name="Whitehead S."/>
            <person name="Salmond G.P.C."/>
            <person name="Birch P.R.J."/>
            <person name="Parkhill J."/>
            <person name="Toth I.K."/>
        </authorList>
    </citation>
    <scope>NUCLEOTIDE SEQUENCE [LARGE SCALE GENOMIC DNA]</scope>
    <source>
        <strain>SCRI 1043 / ATCC BAA-672</strain>
    </source>
</reference>
<dbReference type="EC" id="2.8.1.-" evidence="1"/>
<dbReference type="EMBL" id="BX950851">
    <property type="protein sequence ID" value="CAG74896.1"/>
    <property type="molecule type" value="Genomic_DNA"/>
</dbReference>
<dbReference type="RefSeq" id="WP_011093557.1">
    <property type="nucleotide sequence ID" value="NC_004547.2"/>
</dbReference>
<dbReference type="SMR" id="Q6D5P6"/>
<dbReference type="STRING" id="218491.ECA1995"/>
<dbReference type="GeneID" id="57209304"/>
<dbReference type="KEGG" id="eca:ECA1995"/>
<dbReference type="PATRIC" id="fig|218491.5.peg.2033"/>
<dbReference type="eggNOG" id="COG0037">
    <property type="taxonomic scope" value="Bacteria"/>
</dbReference>
<dbReference type="HOGENOM" id="CLU_026481_0_0_6"/>
<dbReference type="OrthoDB" id="9801054at2"/>
<dbReference type="Proteomes" id="UP000007966">
    <property type="component" value="Chromosome"/>
</dbReference>
<dbReference type="GO" id="GO:0005737">
    <property type="term" value="C:cytoplasm"/>
    <property type="evidence" value="ECO:0007669"/>
    <property type="project" value="UniProtKB-SubCell"/>
</dbReference>
<dbReference type="GO" id="GO:0051539">
    <property type="term" value="F:4 iron, 4 sulfur cluster binding"/>
    <property type="evidence" value="ECO:0007669"/>
    <property type="project" value="UniProtKB-UniRule"/>
</dbReference>
<dbReference type="GO" id="GO:0005524">
    <property type="term" value="F:ATP binding"/>
    <property type="evidence" value="ECO:0007669"/>
    <property type="project" value="UniProtKB-UniRule"/>
</dbReference>
<dbReference type="GO" id="GO:0000287">
    <property type="term" value="F:magnesium ion binding"/>
    <property type="evidence" value="ECO:0007669"/>
    <property type="project" value="UniProtKB-UniRule"/>
</dbReference>
<dbReference type="GO" id="GO:0016783">
    <property type="term" value="F:sulfurtransferase activity"/>
    <property type="evidence" value="ECO:0007669"/>
    <property type="project" value="UniProtKB-UniRule"/>
</dbReference>
<dbReference type="GO" id="GO:0000049">
    <property type="term" value="F:tRNA binding"/>
    <property type="evidence" value="ECO:0007669"/>
    <property type="project" value="UniProtKB-KW"/>
</dbReference>
<dbReference type="GO" id="GO:0034227">
    <property type="term" value="P:tRNA thio-modification"/>
    <property type="evidence" value="ECO:0007669"/>
    <property type="project" value="UniProtKB-UniRule"/>
</dbReference>
<dbReference type="CDD" id="cd24138">
    <property type="entry name" value="TtcA-like"/>
    <property type="match status" value="1"/>
</dbReference>
<dbReference type="Gene3D" id="3.40.50.620">
    <property type="entry name" value="HUPs"/>
    <property type="match status" value="1"/>
</dbReference>
<dbReference type="HAMAP" id="MF_01850">
    <property type="entry name" value="TtcA"/>
    <property type="match status" value="1"/>
</dbReference>
<dbReference type="InterPro" id="IPR014729">
    <property type="entry name" value="Rossmann-like_a/b/a_fold"/>
</dbReference>
<dbReference type="InterPro" id="IPR011063">
    <property type="entry name" value="TilS/TtcA_N"/>
</dbReference>
<dbReference type="InterPro" id="IPR012089">
    <property type="entry name" value="tRNA_Cyd_32_2_STrfase"/>
</dbReference>
<dbReference type="InterPro" id="IPR035107">
    <property type="entry name" value="tRNA_thiolation_TtcA_Ctu1"/>
</dbReference>
<dbReference type="NCBIfam" id="NF007972">
    <property type="entry name" value="PRK10696.1"/>
    <property type="match status" value="1"/>
</dbReference>
<dbReference type="PANTHER" id="PTHR43686:SF1">
    <property type="entry name" value="AMINOTRAN_5 DOMAIN-CONTAINING PROTEIN"/>
    <property type="match status" value="1"/>
</dbReference>
<dbReference type="PANTHER" id="PTHR43686">
    <property type="entry name" value="SULFURTRANSFERASE-RELATED"/>
    <property type="match status" value="1"/>
</dbReference>
<dbReference type="Pfam" id="PF01171">
    <property type="entry name" value="ATP_bind_3"/>
    <property type="match status" value="1"/>
</dbReference>
<dbReference type="PIRSF" id="PIRSF004976">
    <property type="entry name" value="ATPase_YdaO"/>
    <property type="match status" value="1"/>
</dbReference>
<dbReference type="SUPFAM" id="SSF52402">
    <property type="entry name" value="Adenine nucleotide alpha hydrolases-like"/>
    <property type="match status" value="1"/>
</dbReference>
<sequence length="311" mass="35506">MSENQQTNQKEQYNLNKLQKRLRRNVGEAIADFNMIEEGDRIMVCLSGGKDSFTMLEILRNLQQSAPINFSLVAVNLDQKQPGFPEHILPQYLDNIGVEYKIVEENTYGIVKDKIPEGKTTCSLCSRLRRGILYRTATELGATKIALGHHRDDILQTLFLNMFYGGKLKGMPPKLMSDDGKHIVIRPLAYCREKDIERFAEARQYPIIPCNLCGSQPNLQRQVIKDMLRDWDKRHPGRIETMFSAMQNVVPSHLADHALFDFKNIRHGSDVVDGGDLAFDREELPLQPAGWQPEEDDDASPITRLDVLEIK</sequence>
<comment type="function">
    <text evidence="1">Catalyzes the ATP-dependent 2-thiolation of cytidine in position 32 of tRNA, to form 2-thiocytidine (s(2)C32). The sulfur atoms are provided by the cysteine/cysteine desulfurase (IscS) system.</text>
</comment>
<comment type="catalytic activity">
    <reaction evidence="1">
        <text>cytidine(32) in tRNA + S-sulfanyl-L-cysteinyl-[cysteine desulfurase] + AH2 + ATP = 2-thiocytidine(32) in tRNA + L-cysteinyl-[cysteine desulfurase] + A + AMP + diphosphate + H(+)</text>
        <dbReference type="Rhea" id="RHEA:57048"/>
        <dbReference type="Rhea" id="RHEA-COMP:10288"/>
        <dbReference type="Rhea" id="RHEA-COMP:12157"/>
        <dbReference type="Rhea" id="RHEA-COMP:12158"/>
        <dbReference type="Rhea" id="RHEA-COMP:14821"/>
        <dbReference type="ChEBI" id="CHEBI:13193"/>
        <dbReference type="ChEBI" id="CHEBI:15378"/>
        <dbReference type="ChEBI" id="CHEBI:17499"/>
        <dbReference type="ChEBI" id="CHEBI:29950"/>
        <dbReference type="ChEBI" id="CHEBI:30616"/>
        <dbReference type="ChEBI" id="CHEBI:33019"/>
        <dbReference type="ChEBI" id="CHEBI:61963"/>
        <dbReference type="ChEBI" id="CHEBI:82748"/>
        <dbReference type="ChEBI" id="CHEBI:141453"/>
        <dbReference type="ChEBI" id="CHEBI:456215"/>
    </reaction>
    <physiologicalReaction direction="left-to-right" evidence="1">
        <dbReference type="Rhea" id="RHEA:57049"/>
    </physiologicalReaction>
</comment>
<comment type="cofactor">
    <cofactor evidence="1">
        <name>Mg(2+)</name>
        <dbReference type="ChEBI" id="CHEBI:18420"/>
    </cofactor>
</comment>
<comment type="cofactor">
    <cofactor evidence="1">
        <name>[4Fe-4S] cluster</name>
        <dbReference type="ChEBI" id="CHEBI:49883"/>
    </cofactor>
    <text evidence="1">Binds 1 [4Fe-4S] cluster per subunit. The cluster is chelated by three Cys residues, the fourth Fe has a free coordination site that may bind a sulfur atom transferred from the persulfide of IscS.</text>
</comment>
<comment type="pathway">
    <text evidence="1">tRNA modification.</text>
</comment>
<comment type="subunit">
    <text evidence="1">Homodimer.</text>
</comment>
<comment type="subcellular location">
    <subcellularLocation>
        <location evidence="1">Cytoplasm</location>
    </subcellularLocation>
</comment>
<comment type="miscellaneous">
    <text evidence="1">The thiolation reaction likely consists of two steps: a first activation step by ATP to form an adenylated intermediate of the target base of tRNA, and a second nucleophilic substitution step of the sulfur (S) atom supplied by the hydrosulfide attached to the Fe-S cluster.</text>
</comment>
<comment type="similarity">
    <text evidence="1">Belongs to the TtcA family.</text>
</comment>
<proteinExistence type="inferred from homology"/>
<accession>Q6D5P6</accession>
<name>TTCA_PECAS</name>
<protein>
    <recommendedName>
        <fullName evidence="1">tRNA-cytidine(32) 2-sulfurtransferase</fullName>
        <ecNumber evidence="1">2.8.1.-</ecNumber>
    </recommendedName>
    <alternativeName>
        <fullName evidence="1">Two-thiocytidine biosynthesis protein A</fullName>
    </alternativeName>
    <alternativeName>
        <fullName evidence="1">tRNA 2-thiocytidine biosynthesis protein TtcA</fullName>
    </alternativeName>
</protein>
<gene>
    <name evidence="1" type="primary">ttcA</name>
    <name type="ordered locus">ECA1995</name>
</gene>
<evidence type="ECO:0000255" key="1">
    <source>
        <dbReference type="HAMAP-Rule" id="MF_01850"/>
    </source>
</evidence>
<feature type="chain" id="PRO_0000348716" description="tRNA-cytidine(32) 2-sulfurtransferase">
    <location>
        <begin position="1"/>
        <end position="311"/>
    </location>
</feature>
<feature type="short sequence motif" description="PP-loop motif" evidence="1">
    <location>
        <begin position="47"/>
        <end position="52"/>
    </location>
</feature>
<feature type="binding site" evidence="1">
    <location>
        <position position="122"/>
    </location>
    <ligand>
        <name>[4Fe-4S] cluster</name>
        <dbReference type="ChEBI" id="CHEBI:49883"/>
    </ligand>
</feature>
<feature type="binding site" evidence="1">
    <location>
        <position position="125"/>
    </location>
    <ligand>
        <name>[4Fe-4S] cluster</name>
        <dbReference type="ChEBI" id="CHEBI:49883"/>
    </ligand>
</feature>
<feature type="binding site" evidence="1">
    <location>
        <position position="213"/>
    </location>
    <ligand>
        <name>[4Fe-4S] cluster</name>
        <dbReference type="ChEBI" id="CHEBI:49883"/>
    </ligand>
</feature>
<organism>
    <name type="scientific">Pectobacterium atrosepticum (strain SCRI 1043 / ATCC BAA-672)</name>
    <name type="common">Erwinia carotovora subsp. atroseptica</name>
    <dbReference type="NCBI Taxonomy" id="218491"/>
    <lineage>
        <taxon>Bacteria</taxon>
        <taxon>Pseudomonadati</taxon>
        <taxon>Pseudomonadota</taxon>
        <taxon>Gammaproteobacteria</taxon>
        <taxon>Enterobacterales</taxon>
        <taxon>Pectobacteriaceae</taxon>
        <taxon>Pectobacterium</taxon>
    </lineage>
</organism>